<dbReference type="EMBL" id="CH479189">
    <property type="protein sequence ID" value="EDW25510.1"/>
    <property type="molecule type" value="Genomic_DNA"/>
</dbReference>
<dbReference type="SMR" id="B4GT01"/>
<dbReference type="STRING" id="7234.B4GT01"/>
<dbReference type="EnsemblMetazoa" id="FBtr0192001">
    <property type="protein sequence ID" value="FBpp0190493"/>
    <property type="gene ID" value="FBgn0163968"/>
</dbReference>
<dbReference type="EnsemblMetazoa" id="XM_002021631.2">
    <property type="protein sequence ID" value="XP_002021667.1"/>
    <property type="gene ID" value="LOC6596580"/>
</dbReference>
<dbReference type="GeneID" id="6596580"/>
<dbReference type="KEGG" id="dpe:6596580"/>
<dbReference type="eggNOG" id="KOG0313">
    <property type="taxonomic scope" value="Eukaryota"/>
</dbReference>
<dbReference type="HOGENOM" id="CLU_000288_57_0_1"/>
<dbReference type="OMA" id="DHKYVEF"/>
<dbReference type="OrthoDB" id="10251381at2759"/>
<dbReference type="PhylomeDB" id="B4GT01"/>
<dbReference type="Proteomes" id="UP000008744">
    <property type="component" value="Unassembled WGS sequence"/>
</dbReference>
<dbReference type="GO" id="GO:0005654">
    <property type="term" value="C:nucleoplasm"/>
    <property type="evidence" value="ECO:0007669"/>
    <property type="project" value="UniProtKB-SubCell"/>
</dbReference>
<dbReference type="GO" id="GO:0070545">
    <property type="term" value="C:PeBoW complex"/>
    <property type="evidence" value="ECO:0000250"/>
    <property type="project" value="UniProtKB"/>
</dbReference>
<dbReference type="GO" id="GO:0030687">
    <property type="term" value="C:preribosome, large subunit precursor"/>
    <property type="evidence" value="ECO:0007669"/>
    <property type="project" value="UniProtKB-UniRule"/>
</dbReference>
<dbReference type="GO" id="GO:0043021">
    <property type="term" value="F:ribonucleoprotein complex binding"/>
    <property type="evidence" value="ECO:0007669"/>
    <property type="project" value="UniProtKB-UniRule"/>
</dbReference>
<dbReference type="GO" id="GO:0000466">
    <property type="term" value="P:maturation of 5.8S rRNA from tricistronic rRNA transcript (SSU-rRNA, 5.8S rRNA, LSU-rRNA)"/>
    <property type="evidence" value="ECO:0007669"/>
    <property type="project" value="UniProtKB-UniRule"/>
</dbReference>
<dbReference type="GO" id="GO:0000463">
    <property type="term" value="P:maturation of LSU-rRNA from tricistronic rRNA transcript (SSU-rRNA, 5.8S rRNA, LSU-rRNA)"/>
    <property type="evidence" value="ECO:0000250"/>
    <property type="project" value="UniProtKB"/>
</dbReference>
<dbReference type="CDD" id="cd00200">
    <property type="entry name" value="WD40"/>
    <property type="match status" value="1"/>
</dbReference>
<dbReference type="FunFam" id="2.130.10.10:FF:000878">
    <property type="entry name" value="Ribosome biogenesis protein WDR12 homolog"/>
    <property type="match status" value="1"/>
</dbReference>
<dbReference type="FunFam" id="2.130.10.10:FF:000989">
    <property type="entry name" value="Ribosome biogenesis protein WDR12 homolog"/>
    <property type="match status" value="1"/>
</dbReference>
<dbReference type="FunFam" id="2.130.10.10:FF:001205">
    <property type="entry name" value="Ribosome biogenesis protein WDR12 homolog"/>
    <property type="match status" value="1"/>
</dbReference>
<dbReference type="Gene3D" id="2.130.10.10">
    <property type="entry name" value="YVTN repeat-like/Quinoprotein amine dehydrogenase"/>
    <property type="match status" value="3"/>
</dbReference>
<dbReference type="HAMAP" id="MF_03029">
    <property type="entry name" value="WDR12"/>
    <property type="match status" value="1"/>
</dbReference>
<dbReference type="InterPro" id="IPR020472">
    <property type="entry name" value="G-protein_beta_WD-40_rep"/>
</dbReference>
<dbReference type="InterPro" id="IPR012972">
    <property type="entry name" value="NLE"/>
</dbReference>
<dbReference type="InterPro" id="IPR015943">
    <property type="entry name" value="WD40/YVTN_repeat-like_dom_sf"/>
</dbReference>
<dbReference type="InterPro" id="IPR019775">
    <property type="entry name" value="WD40_repeat_CS"/>
</dbReference>
<dbReference type="InterPro" id="IPR036322">
    <property type="entry name" value="WD40_repeat_dom_sf"/>
</dbReference>
<dbReference type="InterPro" id="IPR001680">
    <property type="entry name" value="WD40_rpt"/>
</dbReference>
<dbReference type="InterPro" id="IPR028599">
    <property type="entry name" value="WDR12/Ytm1"/>
</dbReference>
<dbReference type="PANTHER" id="PTHR19855:SF11">
    <property type="entry name" value="RIBOSOME BIOGENESIS PROTEIN WDR12"/>
    <property type="match status" value="1"/>
</dbReference>
<dbReference type="PANTHER" id="PTHR19855">
    <property type="entry name" value="WD40 REPEAT PROTEIN 12, 37"/>
    <property type="match status" value="1"/>
</dbReference>
<dbReference type="Pfam" id="PF08154">
    <property type="entry name" value="NLE"/>
    <property type="match status" value="1"/>
</dbReference>
<dbReference type="Pfam" id="PF00400">
    <property type="entry name" value="WD40"/>
    <property type="match status" value="7"/>
</dbReference>
<dbReference type="PRINTS" id="PR00320">
    <property type="entry name" value="GPROTEINBRPT"/>
</dbReference>
<dbReference type="SMART" id="SM00320">
    <property type="entry name" value="WD40"/>
    <property type="match status" value="7"/>
</dbReference>
<dbReference type="SUPFAM" id="SSF50978">
    <property type="entry name" value="WD40 repeat-like"/>
    <property type="match status" value="1"/>
</dbReference>
<dbReference type="PROSITE" id="PS00678">
    <property type="entry name" value="WD_REPEATS_1"/>
    <property type="match status" value="1"/>
</dbReference>
<dbReference type="PROSITE" id="PS50082">
    <property type="entry name" value="WD_REPEATS_2"/>
    <property type="match status" value="4"/>
</dbReference>
<dbReference type="PROSITE" id="PS50294">
    <property type="entry name" value="WD_REPEATS_REGION"/>
    <property type="match status" value="1"/>
</dbReference>
<keyword id="KW-0539">Nucleus</keyword>
<keyword id="KW-1185">Reference proteome</keyword>
<keyword id="KW-0677">Repeat</keyword>
<keyword id="KW-0690">Ribosome biogenesis</keyword>
<keyword id="KW-0698">rRNA processing</keyword>
<keyword id="KW-0853">WD repeat</keyword>
<sequence length="419" mass="46879">MDVDNGEGQVQVHLKTKQEHYAVPDVPYAIDGTVTTAELNTFVNALLLSKGSSAVDFDFLVFDEYLRGRLCDHLREKAISFEDAIEIEYVERFPAPEPQDCLLHDDWVSAVKASGKWILTGCYDNTLNIWTNKGKHILTIPGHTAPIKAVDWISLDDDTGRFVSSSQDQTAMLWQWNVGANTVECVSVCKGHERGVDSVSVSPDGQRFATGSWDTMLKVWSAELEDAGEGTSKRMKESGVRTPKITLQGHRESISAVQWMDASTLLTGSWDHTLKVWDLSLEGIKAEISTNKSIFDASYSKLNHLILTASADKNLRLYDSRTNQGSVVRNTYLGHNAWVQTVMWSTTEEFLFVSGSYDNQNKLWDCRSPKAPLYDLLGHGEKVLDIDWTNPKYIVSGGSDNTVRVFKSRKALVENMDTK</sequence>
<protein>
    <recommendedName>
        <fullName evidence="1">Ribosome biogenesis protein WDR12 homolog</fullName>
    </recommendedName>
</protein>
<proteinExistence type="inferred from homology"/>
<accession>B4GT01</accession>
<feature type="chain" id="PRO_0000369560" description="Ribosome biogenesis protein WDR12 homolog">
    <location>
        <begin position="1"/>
        <end position="419"/>
    </location>
</feature>
<feature type="repeat" description="WD 1">
    <location>
        <begin position="103"/>
        <end position="141"/>
    </location>
</feature>
<feature type="repeat" description="WD 2">
    <location>
        <begin position="142"/>
        <end position="184"/>
    </location>
</feature>
<feature type="repeat" description="WD 3">
    <location>
        <begin position="191"/>
        <end position="230"/>
    </location>
</feature>
<feature type="repeat" description="WD 4">
    <location>
        <begin position="249"/>
        <end position="287"/>
    </location>
</feature>
<feature type="repeat" description="WD 5">
    <location>
        <begin position="289"/>
        <end position="328"/>
    </location>
</feature>
<feature type="repeat" description="WD 6">
    <location>
        <begin position="334"/>
        <end position="374"/>
    </location>
</feature>
<feature type="repeat" description="WD 7">
    <location>
        <begin position="378"/>
        <end position="416"/>
    </location>
</feature>
<feature type="region of interest" description="Ubiquitin-like (UBL) domain" evidence="1">
    <location>
        <begin position="10"/>
        <end position="91"/>
    </location>
</feature>
<gene>
    <name type="ORF">GL26386</name>
</gene>
<reference key="1">
    <citation type="journal article" date="2007" name="Nature">
        <title>Evolution of genes and genomes on the Drosophila phylogeny.</title>
        <authorList>
            <consortium name="Drosophila 12 genomes consortium"/>
        </authorList>
    </citation>
    <scope>NUCLEOTIDE SEQUENCE [LARGE SCALE GENOMIC DNA]</scope>
    <source>
        <strain>MSH-3 / Tucson 14011-0111.49</strain>
    </source>
</reference>
<comment type="function">
    <text evidence="1">Required for maturation of ribosomal RNAs and formation of the large ribosomal subunit.</text>
</comment>
<comment type="subcellular location">
    <subcellularLocation>
        <location evidence="1">Nucleus</location>
        <location evidence="1">Nucleolus</location>
    </subcellularLocation>
    <subcellularLocation>
        <location evidence="1">Nucleus</location>
        <location evidence="1">Nucleoplasm</location>
    </subcellularLocation>
</comment>
<comment type="similarity">
    <text evidence="1">Belongs to the WD repeat WDR12/YTM1 family.</text>
</comment>
<organism>
    <name type="scientific">Drosophila persimilis</name>
    <name type="common">Fruit fly</name>
    <dbReference type="NCBI Taxonomy" id="7234"/>
    <lineage>
        <taxon>Eukaryota</taxon>
        <taxon>Metazoa</taxon>
        <taxon>Ecdysozoa</taxon>
        <taxon>Arthropoda</taxon>
        <taxon>Hexapoda</taxon>
        <taxon>Insecta</taxon>
        <taxon>Pterygota</taxon>
        <taxon>Neoptera</taxon>
        <taxon>Endopterygota</taxon>
        <taxon>Diptera</taxon>
        <taxon>Brachycera</taxon>
        <taxon>Muscomorpha</taxon>
        <taxon>Ephydroidea</taxon>
        <taxon>Drosophilidae</taxon>
        <taxon>Drosophila</taxon>
        <taxon>Sophophora</taxon>
    </lineage>
</organism>
<name>WDR12_DROPE</name>
<evidence type="ECO:0000255" key="1">
    <source>
        <dbReference type="HAMAP-Rule" id="MF_03029"/>
    </source>
</evidence>